<dbReference type="EMBL" id="CP000262">
    <property type="protein sequence ID" value="ABF38012.1"/>
    <property type="status" value="ALT_INIT"/>
    <property type="molecule type" value="Genomic_DNA"/>
</dbReference>
<dbReference type="SMR" id="Q1J6H1"/>
<dbReference type="KEGG" id="spi:MGAS10750_Spy1062"/>
<dbReference type="HOGENOM" id="CLU_027562_9_6_9"/>
<dbReference type="Proteomes" id="UP000002434">
    <property type="component" value="Chromosome"/>
</dbReference>
<dbReference type="GO" id="GO:0005737">
    <property type="term" value="C:cytoplasm"/>
    <property type="evidence" value="ECO:0007669"/>
    <property type="project" value="UniProtKB-SubCell"/>
</dbReference>
<dbReference type="GO" id="GO:0003677">
    <property type="term" value="F:DNA binding"/>
    <property type="evidence" value="ECO:0007669"/>
    <property type="project" value="UniProtKB-KW"/>
</dbReference>
<dbReference type="GO" id="GO:0009037">
    <property type="term" value="F:tyrosine-based site-specific recombinase activity"/>
    <property type="evidence" value="ECO:0007669"/>
    <property type="project" value="UniProtKB-UniRule"/>
</dbReference>
<dbReference type="GO" id="GO:0051301">
    <property type="term" value="P:cell division"/>
    <property type="evidence" value="ECO:0007669"/>
    <property type="project" value="UniProtKB-KW"/>
</dbReference>
<dbReference type="GO" id="GO:0007059">
    <property type="term" value="P:chromosome segregation"/>
    <property type="evidence" value="ECO:0007669"/>
    <property type="project" value="UniProtKB-UniRule"/>
</dbReference>
<dbReference type="GO" id="GO:0006310">
    <property type="term" value="P:DNA recombination"/>
    <property type="evidence" value="ECO:0007669"/>
    <property type="project" value="UniProtKB-UniRule"/>
</dbReference>
<dbReference type="CDD" id="cd00397">
    <property type="entry name" value="DNA_BRE_C"/>
    <property type="match status" value="1"/>
</dbReference>
<dbReference type="Gene3D" id="1.10.150.130">
    <property type="match status" value="1"/>
</dbReference>
<dbReference type="Gene3D" id="1.10.443.10">
    <property type="entry name" value="Intergrase catalytic core"/>
    <property type="match status" value="1"/>
</dbReference>
<dbReference type="HAMAP" id="MF_01816">
    <property type="entry name" value="Recomb_XerS"/>
    <property type="match status" value="1"/>
</dbReference>
<dbReference type="InterPro" id="IPR044068">
    <property type="entry name" value="CB"/>
</dbReference>
<dbReference type="InterPro" id="IPR011010">
    <property type="entry name" value="DNA_brk_join_enz"/>
</dbReference>
<dbReference type="InterPro" id="IPR013762">
    <property type="entry name" value="Integrase-like_cat_sf"/>
</dbReference>
<dbReference type="InterPro" id="IPR002104">
    <property type="entry name" value="Integrase_catalytic"/>
</dbReference>
<dbReference type="InterPro" id="IPR010998">
    <property type="entry name" value="Integrase_recombinase_N"/>
</dbReference>
<dbReference type="InterPro" id="IPR004107">
    <property type="entry name" value="Integrase_SAM-like_N"/>
</dbReference>
<dbReference type="InterPro" id="IPR023670">
    <property type="entry name" value="Recomb_XerS"/>
</dbReference>
<dbReference type="InterPro" id="IPR050090">
    <property type="entry name" value="Tyrosine_recombinase_XerCD"/>
</dbReference>
<dbReference type="NCBIfam" id="NF003462">
    <property type="entry name" value="PRK05084.1"/>
    <property type="match status" value="1"/>
</dbReference>
<dbReference type="PANTHER" id="PTHR30349">
    <property type="entry name" value="PHAGE INTEGRASE-RELATED"/>
    <property type="match status" value="1"/>
</dbReference>
<dbReference type="PANTHER" id="PTHR30349:SF77">
    <property type="entry name" value="TYROSINE RECOMBINASE XERC"/>
    <property type="match status" value="1"/>
</dbReference>
<dbReference type="Pfam" id="PF02899">
    <property type="entry name" value="Phage_int_SAM_1"/>
    <property type="match status" value="1"/>
</dbReference>
<dbReference type="Pfam" id="PF00589">
    <property type="entry name" value="Phage_integrase"/>
    <property type="match status" value="1"/>
</dbReference>
<dbReference type="SUPFAM" id="SSF56349">
    <property type="entry name" value="DNA breaking-rejoining enzymes"/>
    <property type="match status" value="1"/>
</dbReference>
<dbReference type="PROSITE" id="PS51900">
    <property type="entry name" value="CB"/>
    <property type="match status" value="1"/>
</dbReference>
<dbReference type="PROSITE" id="PS51898">
    <property type="entry name" value="TYR_RECOMBINASE"/>
    <property type="match status" value="1"/>
</dbReference>
<evidence type="ECO:0000255" key="1">
    <source>
        <dbReference type="HAMAP-Rule" id="MF_01816"/>
    </source>
</evidence>
<evidence type="ECO:0000255" key="2">
    <source>
        <dbReference type="PROSITE-ProRule" id="PRU01246"/>
    </source>
</evidence>
<evidence type="ECO:0000255" key="3">
    <source>
        <dbReference type="PROSITE-ProRule" id="PRU01248"/>
    </source>
</evidence>
<evidence type="ECO:0000305" key="4"/>
<accession>Q1J6H1</accession>
<keyword id="KW-0131">Cell cycle</keyword>
<keyword id="KW-0132">Cell division</keyword>
<keyword id="KW-0159">Chromosome partition</keyword>
<keyword id="KW-0963">Cytoplasm</keyword>
<keyword id="KW-0229">DNA integration</keyword>
<keyword id="KW-0233">DNA recombination</keyword>
<keyword id="KW-0238">DNA-binding</keyword>
<reference key="1">
    <citation type="journal article" date="2006" name="Proc. Natl. Acad. Sci. U.S.A.">
        <title>Molecular genetic anatomy of inter- and intraserotype variation in the human bacterial pathogen group A Streptococcus.</title>
        <authorList>
            <person name="Beres S.B."/>
            <person name="Richter E.W."/>
            <person name="Nagiec M.J."/>
            <person name="Sumby P."/>
            <person name="Porcella S.F."/>
            <person name="DeLeo F.R."/>
            <person name="Musser J.M."/>
        </authorList>
    </citation>
    <scope>NUCLEOTIDE SEQUENCE [LARGE SCALE GENOMIC DNA]</scope>
    <source>
        <strain>MGAS10750</strain>
    </source>
</reference>
<organism>
    <name type="scientific">Streptococcus pyogenes serotype M4 (strain MGAS10750)</name>
    <dbReference type="NCBI Taxonomy" id="370554"/>
    <lineage>
        <taxon>Bacteria</taxon>
        <taxon>Bacillati</taxon>
        <taxon>Bacillota</taxon>
        <taxon>Bacilli</taxon>
        <taxon>Lactobacillales</taxon>
        <taxon>Streptococcaceae</taxon>
        <taxon>Streptococcus</taxon>
    </lineage>
</organism>
<comment type="function">
    <text evidence="1">Site-specific tyrosine recombinase, which acts by catalyzing the cutting and rejoining of the recombining DNA molecules. Essential to convert dimers of the bacterial chromosome into monomers to permit their segregation at cell division.</text>
</comment>
<comment type="activity regulation">
    <text evidence="1">FtsK is required for recombination.</text>
</comment>
<comment type="subcellular location">
    <subcellularLocation>
        <location evidence="1">Cytoplasm</location>
    </subcellularLocation>
</comment>
<comment type="similarity">
    <text evidence="1">Belongs to the 'phage' integrase family. XerS subfamily.</text>
</comment>
<comment type="sequence caution" evidence="4">
    <conflict type="erroneous initiation">
        <sequence resource="EMBL-CDS" id="ABF38012"/>
    </conflict>
</comment>
<sequence length="356" mass="41472">MRRELLLEKIETYKAIMPWYVLDYYQSKLAVPYSFTTLYEYLKEYKRFFDWLMDADLTQAPKIADIDLSTLEHLTKKDLEAFVLYLRERPSLNTYSTKEGLSQTTINRTLSALSSLYKYLTEEVENDQGEPYFYRNVMKKVSTKKKKETLASRAENIKQKLFLGDETLAFLDYVDKEYEQKLSNRAKSSFRKNKERDLAIIALLLASGVRLSEAVNLDLKDVNLNMMIIEVIRKGGKRDSVNVAGFAKGYLESYLAVRQRRYKAEKQDLAFFLTEYRGVPNRMDASSIEKMVGKYSEDFKIRVTPHKLRHTLATRLYDATKSQVLVSHQLGHSSTQVTDLYTHIVNDEQKNALDNL</sequence>
<feature type="chain" id="PRO_0000372675" description="Tyrosine recombinase XerS">
    <location>
        <begin position="1"/>
        <end position="356"/>
    </location>
</feature>
<feature type="domain" description="Core-binding (CB)" evidence="3">
    <location>
        <begin position="16"/>
        <end position="121"/>
    </location>
</feature>
<feature type="domain" description="Tyr recombinase" evidence="2">
    <location>
        <begin position="169"/>
        <end position="354"/>
    </location>
</feature>
<feature type="active site" evidence="1">
    <location>
        <position position="210"/>
    </location>
</feature>
<feature type="active site" evidence="1">
    <location>
        <position position="234"/>
    </location>
</feature>
<feature type="active site" evidence="1">
    <location>
        <position position="306"/>
    </location>
</feature>
<feature type="active site" evidence="1">
    <location>
        <position position="309"/>
    </location>
</feature>
<feature type="active site" evidence="1">
    <location>
        <position position="332"/>
    </location>
</feature>
<feature type="active site" description="O-(3'-phospho-DNA)-tyrosine intermediate" evidence="1">
    <location>
        <position position="341"/>
    </location>
</feature>
<gene>
    <name evidence="1" type="primary">xerS</name>
    <name type="ordered locus">MGAS10750_Spy1062</name>
</gene>
<proteinExistence type="inferred from homology"/>
<protein>
    <recommendedName>
        <fullName evidence="1">Tyrosine recombinase XerS</fullName>
    </recommendedName>
</protein>
<name>XERS_STRPF</name>